<comment type="function">
    <text evidence="1">Protein S19 forms a complex with S13 that binds strongly to the 16S ribosomal RNA.</text>
</comment>
<comment type="similarity">
    <text evidence="1">Belongs to the universal ribosomal protein uS19 family.</text>
</comment>
<sequence length="186" mass="21642">MREAIKRYGSFELLKGKNTLPELEALLEERKLVLENLKKQLKEAHKGKPKIEAEGDEKLKELIREVNKAQAEVRALEIIVNRVRKYEELYAQYKQMTEKKAYVDPKLWVRIRKMNETGERKVVRTYSRATTIIPEFVGHTIAVHNGKTFVPVYITQDMVGHKLGEFAPTRTFKGHPEKTAKVVKKK</sequence>
<keyword id="KW-1185">Reference proteome</keyword>
<keyword id="KW-0687">Ribonucleoprotein</keyword>
<keyword id="KW-0689">Ribosomal protein</keyword>
<keyword id="KW-0694">RNA-binding</keyword>
<keyword id="KW-0699">rRNA-binding</keyword>
<protein>
    <recommendedName>
        <fullName evidence="1">Small ribosomal subunit protein uS19</fullName>
    </recommendedName>
    <alternativeName>
        <fullName>30S ribosomal protein S19</fullName>
    </alternativeName>
</protein>
<accession>O66435</accession>
<reference key="1">
    <citation type="journal article" date="1998" name="Nature">
        <title>The complete genome of the hyperthermophilic bacterium Aquifex aeolicus.</title>
        <authorList>
            <person name="Deckert G."/>
            <person name="Warren P.V."/>
            <person name="Gaasterland T."/>
            <person name="Young W.G."/>
            <person name="Lenox A.L."/>
            <person name="Graham D.E."/>
            <person name="Overbeek R."/>
            <person name="Snead M.A."/>
            <person name="Keller M."/>
            <person name="Aujay M."/>
            <person name="Huber R."/>
            <person name="Feldman R.A."/>
            <person name="Short J.M."/>
            <person name="Olsen G.J."/>
            <person name="Swanson R.V."/>
        </authorList>
    </citation>
    <scope>NUCLEOTIDE SEQUENCE [LARGE SCALE GENOMIC DNA]</scope>
    <source>
        <strain>VF5</strain>
    </source>
</reference>
<dbReference type="EMBL" id="AE000657">
    <property type="protein sequence ID" value="AAC06401.1"/>
    <property type="molecule type" value="Genomic_DNA"/>
</dbReference>
<dbReference type="PIR" id="H70300">
    <property type="entry name" value="H70300"/>
</dbReference>
<dbReference type="RefSeq" id="NP_212993.1">
    <property type="nucleotide sequence ID" value="NC_000918.1"/>
</dbReference>
<dbReference type="SMR" id="O66435"/>
<dbReference type="STRING" id="224324.aq_015"/>
<dbReference type="EnsemblBacteria" id="AAC06401">
    <property type="protein sequence ID" value="AAC06401"/>
    <property type="gene ID" value="aq_015"/>
</dbReference>
<dbReference type="KEGG" id="aae:aq_015"/>
<dbReference type="PATRIC" id="fig|224324.8.peg.8"/>
<dbReference type="eggNOG" id="COG0185">
    <property type="taxonomic scope" value="Bacteria"/>
</dbReference>
<dbReference type="HOGENOM" id="CLU_124823_0_0_0"/>
<dbReference type="InParanoid" id="O66435"/>
<dbReference type="OrthoDB" id="9797833at2"/>
<dbReference type="Proteomes" id="UP000000798">
    <property type="component" value="Chromosome"/>
</dbReference>
<dbReference type="GO" id="GO:0005737">
    <property type="term" value="C:cytoplasm"/>
    <property type="evidence" value="ECO:0007669"/>
    <property type="project" value="UniProtKB-ARBA"/>
</dbReference>
<dbReference type="GO" id="GO:0015935">
    <property type="term" value="C:small ribosomal subunit"/>
    <property type="evidence" value="ECO:0007669"/>
    <property type="project" value="InterPro"/>
</dbReference>
<dbReference type="GO" id="GO:0019843">
    <property type="term" value="F:rRNA binding"/>
    <property type="evidence" value="ECO:0007669"/>
    <property type="project" value="UniProtKB-UniRule"/>
</dbReference>
<dbReference type="GO" id="GO:0003735">
    <property type="term" value="F:structural constituent of ribosome"/>
    <property type="evidence" value="ECO:0007669"/>
    <property type="project" value="InterPro"/>
</dbReference>
<dbReference type="GO" id="GO:0006412">
    <property type="term" value="P:translation"/>
    <property type="evidence" value="ECO:0007669"/>
    <property type="project" value="UniProtKB-UniRule"/>
</dbReference>
<dbReference type="FunFam" id="3.30.860.10:FF:000001">
    <property type="entry name" value="30S ribosomal protein S19"/>
    <property type="match status" value="1"/>
</dbReference>
<dbReference type="Gene3D" id="3.30.860.10">
    <property type="entry name" value="30s Ribosomal Protein S19, Chain A"/>
    <property type="match status" value="1"/>
</dbReference>
<dbReference type="HAMAP" id="MF_00531">
    <property type="entry name" value="Ribosomal_uS19"/>
    <property type="match status" value="1"/>
</dbReference>
<dbReference type="InterPro" id="IPR002222">
    <property type="entry name" value="Ribosomal_uS19"/>
</dbReference>
<dbReference type="InterPro" id="IPR005732">
    <property type="entry name" value="Ribosomal_uS19_bac-type"/>
</dbReference>
<dbReference type="InterPro" id="IPR020934">
    <property type="entry name" value="Ribosomal_uS19_CS"/>
</dbReference>
<dbReference type="InterPro" id="IPR023575">
    <property type="entry name" value="Ribosomal_uS19_SF"/>
</dbReference>
<dbReference type="NCBIfam" id="TIGR01050">
    <property type="entry name" value="rpsS_bact"/>
    <property type="match status" value="1"/>
</dbReference>
<dbReference type="PANTHER" id="PTHR11880">
    <property type="entry name" value="RIBOSOMAL PROTEIN S19P FAMILY MEMBER"/>
    <property type="match status" value="1"/>
</dbReference>
<dbReference type="PANTHER" id="PTHR11880:SF8">
    <property type="entry name" value="SMALL RIBOSOMAL SUBUNIT PROTEIN US19M"/>
    <property type="match status" value="1"/>
</dbReference>
<dbReference type="Pfam" id="PF00203">
    <property type="entry name" value="Ribosomal_S19"/>
    <property type="match status" value="1"/>
</dbReference>
<dbReference type="PRINTS" id="PR00975">
    <property type="entry name" value="RIBOSOMALS19"/>
</dbReference>
<dbReference type="SUPFAM" id="SSF54570">
    <property type="entry name" value="Ribosomal protein S19"/>
    <property type="match status" value="1"/>
</dbReference>
<dbReference type="PROSITE" id="PS00323">
    <property type="entry name" value="RIBOSOMAL_S19"/>
    <property type="match status" value="1"/>
</dbReference>
<evidence type="ECO:0000255" key="1">
    <source>
        <dbReference type="HAMAP-Rule" id="MF_00531"/>
    </source>
</evidence>
<gene>
    <name evidence="1" type="primary">rpsS</name>
    <name type="ordered locus">aq_015</name>
</gene>
<name>RS19_AQUAE</name>
<proteinExistence type="inferred from homology"/>
<feature type="chain" id="PRO_0000129767" description="Small ribosomal subunit protein uS19">
    <location>
        <begin position="1"/>
        <end position="186"/>
    </location>
</feature>
<feature type="region of interest" description="Unknown">
    <location>
        <begin position="1"/>
        <end position="95"/>
    </location>
</feature>
<feature type="region of interest" description="Small ribosomal subunit protein uS19">
    <location>
        <begin position="96"/>
        <end position="186"/>
    </location>
</feature>
<organism>
    <name type="scientific">Aquifex aeolicus (strain VF5)</name>
    <dbReference type="NCBI Taxonomy" id="224324"/>
    <lineage>
        <taxon>Bacteria</taxon>
        <taxon>Pseudomonadati</taxon>
        <taxon>Aquificota</taxon>
        <taxon>Aquificia</taxon>
        <taxon>Aquificales</taxon>
        <taxon>Aquificaceae</taxon>
        <taxon>Aquifex</taxon>
    </lineage>
</organism>